<reference key="1">
    <citation type="journal article" date="1995" name="Science">
        <title>The minimal gene complement of Mycoplasma genitalium.</title>
        <authorList>
            <person name="Fraser C.M."/>
            <person name="Gocayne J.D."/>
            <person name="White O."/>
            <person name="Adams M.D."/>
            <person name="Clayton R.A."/>
            <person name="Fleischmann R.D."/>
            <person name="Bult C.J."/>
            <person name="Kerlavage A.R."/>
            <person name="Sutton G.G."/>
            <person name="Kelley J.M."/>
            <person name="Fritchman J.L."/>
            <person name="Weidman J.F."/>
            <person name="Small K.V."/>
            <person name="Sandusky M."/>
            <person name="Fuhrmann J.L."/>
            <person name="Nguyen D.T."/>
            <person name="Utterback T.R."/>
            <person name="Saudek D.M."/>
            <person name="Phillips C.A."/>
            <person name="Merrick J.M."/>
            <person name="Tomb J.-F."/>
            <person name="Dougherty B.A."/>
            <person name="Bott K.F."/>
            <person name="Hu P.-C."/>
            <person name="Lucier T.S."/>
            <person name="Peterson S.N."/>
            <person name="Smith H.O."/>
            <person name="Hutchison C.A. III"/>
            <person name="Venter J.C."/>
        </authorList>
    </citation>
    <scope>NUCLEOTIDE SEQUENCE [LARGE SCALE GENOMIC DNA]</scope>
    <source>
        <strain>ATCC 33530 / DSM 19775 / NCTC 10195 / G37</strain>
    </source>
</reference>
<proteinExistence type="inferred from homology"/>
<sequence length="367" mass="41888">MSIIAKTVFIGLSGGVDSAVSALLLKKQYQEVIGVFMECWDETLNNDFYGHKKINNNKSGCSSFQDFQQAKKIANSLGIKLIKKNLIEAYWNKVFLPMIQSFKKGLTPNPDIWCNRFIKFGLLHDFCKQINPNSLFATGHYAKINMIENQPLLSIPKDTNKDQTYFLANVKKEQFQNVIFPLADLKKITVRNIARENNWEVADKKDSTGICFIGERHFSDFLKNYLPVKKGLIKDWKTKQTISEHDGVWFYTIGQRSGLNLGGLKQRHFVVAKDIETNELFVSCDKEELLKTTILLDQFNWLYTPKQLPSQVLVRIRHAQKPEIAKLKLLSDNKLEITFKNPVISVASGQFGVLYTLDQICLGAGLI</sequence>
<protein>
    <recommendedName>
        <fullName evidence="1">tRNA-specific 2-thiouridylase MnmA</fullName>
        <ecNumber evidence="1">2.8.1.13</ecNumber>
    </recommendedName>
</protein>
<gene>
    <name evidence="1" type="primary">mnmA</name>
    <name type="synonym">trmU</name>
    <name type="ordered locus">MG295</name>
</gene>
<dbReference type="EC" id="2.8.1.13" evidence="1"/>
<dbReference type="EMBL" id="L43967">
    <property type="protein sequence ID" value="AAC71516.1"/>
    <property type="molecule type" value="Genomic_DNA"/>
</dbReference>
<dbReference type="PIR" id="F64232">
    <property type="entry name" value="F64232"/>
</dbReference>
<dbReference type="RefSeq" id="WP_010869415.1">
    <property type="nucleotide sequence ID" value="NC_000908.2"/>
</dbReference>
<dbReference type="SMR" id="P47537"/>
<dbReference type="FunCoup" id="P47537">
    <property type="interactions" value="193"/>
</dbReference>
<dbReference type="STRING" id="243273.MG_295"/>
<dbReference type="GeneID" id="88282458"/>
<dbReference type="KEGG" id="mge:MG_295"/>
<dbReference type="eggNOG" id="COG0482">
    <property type="taxonomic scope" value="Bacteria"/>
</dbReference>
<dbReference type="HOGENOM" id="CLU_035188_1_0_14"/>
<dbReference type="InParanoid" id="P47537"/>
<dbReference type="OrthoDB" id="9800696at2"/>
<dbReference type="BioCyc" id="MGEN243273:G1GJ2-364-MONOMER"/>
<dbReference type="Proteomes" id="UP000000807">
    <property type="component" value="Chromosome"/>
</dbReference>
<dbReference type="GO" id="GO:0005737">
    <property type="term" value="C:cytoplasm"/>
    <property type="evidence" value="ECO:0007669"/>
    <property type="project" value="UniProtKB-SubCell"/>
</dbReference>
<dbReference type="GO" id="GO:0005524">
    <property type="term" value="F:ATP binding"/>
    <property type="evidence" value="ECO:0007669"/>
    <property type="project" value="UniProtKB-KW"/>
</dbReference>
<dbReference type="GO" id="GO:0000049">
    <property type="term" value="F:tRNA binding"/>
    <property type="evidence" value="ECO:0007669"/>
    <property type="project" value="UniProtKB-KW"/>
</dbReference>
<dbReference type="GO" id="GO:0103016">
    <property type="term" value="F:tRNA-uridine 2-sulfurtransferase activity"/>
    <property type="evidence" value="ECO:0007669"/>
    <property type="project" value="UniProtKB-EC"/>
</dbReference>
<dbReference type="GO" id="GO:0002143">
    <property type="term" value="P:tRNA wobble position uridine thiolation"/>
    <property type="evidence" value="ECO:0000318"/>
    <property type="project" value="GO_Central"/>
</dbReference>
<dbReference type="CDD" id="cd01998">
    <property type="entry name" value="MnmA_TRMU-like"/>
    <property type="match status" value="1"/>
</dbReference>
<dbReference type="FunFam" id="2.30.30.280:FF:000001">
    <property type="entry name" value="tRNA-specific 2-thiouridylase MnmA"/>
    <property type="match status" value="1"/>
</dbReference>
<dbReference type="FunFam" id="3.40.50.620:FF:000453">
    <property type="entry name" value="tRNA-specific 2-thiouridylase MnmA"/>
    <property type="match status" value="1"/>
</dbReference>
<dbReference type="Gene3D" id="2.30.30.280">
    <property type="entry name" value="Adenine nucleotide alpha hydrolases-like domains"/>
    <property type="match status" value="1"/>
</dbReference>
<dbReference type="Gene3D" id="3.40.50.620">
    <property type="entry name" value="HUPs"/>
    <property type="match status" value="1"/>
</dbReference>
<dbReference type="Gene3D" id="2.40.30.10">
    <property type="entry name" value="Translation factors"/>
    <property type="match status" value="1"/>
</dbReference>
<dbReference type="HAMAP" id="MF_00144">
    <property type="entry name" value="tRNA_thiouridyl_MnmA"/>
    <property type="match status" value="1"/>
</dbReference>
<dbReference type="InterPro" id="IPR004506">
    <property type="entry name" value="MnmA-like"/>
</dbReference>
<dbReference type="InterPro" id="IPR046885">
    <property type="entry name" value="MnmA-like_C"/>
</dbReference>
<dbReference type="InterPro" id="IPR046884">
    <property type="entry name" value="MnmA-like_central"/>
</dbReference>
<dbReference type="InterPro" id="IPR023382">
    <property type="entry name" value="MnmA-like_central_sf"/>
</dbReference>
<dbReference type="InterPro" id="IPR014729">
    <property type="entry name" value="Rossmann-like_a/b/a_fold"/>
</dbReference>
<dbReference type="NCBIfam" id="NF001138">
    <property type="entry name" value="PRK00143.1"/>
    <property type="match status" value="1"/>
</dbReference>
<dbReference type="NCBIfam" id="TIGR00420">
    <property type="entry name" value="trmU"/>
    <property type="match status" value="1"/>
</dbReference>
<dbReference type="PANTHER" id="PTHR11933:SF5">
    <property type="entry name" value="MITOCHONDRIAL TRNA-SPECIFIC 2-THIOURIDYLASE 1"/>
    <property type="match status" value="1"/>
</dbReference>
<dbReference type="PANTHER" id="PTHR11933">
    <property type="entry name" value="TRNA 5-METHYLAMINOMETHYL-2-THIOURIDYLATE -METHYLTRANSFERASE"/>
    <property type="match status" value="1"/>
</dbReference>
<dbReference type="Pfam" id="PF03054">
    <property type="entry name" value="tRNA_Me_trans"/>
    <property type="match status" value="1"/>
</dbReference>
<dbReference type="Pfam" id="PF20258">
    <property type="entry name" value="tRNA_Me_trans_C"/>
    <property type="match status" value="1"/>
</dbReference>
<dbReference type="Pfam" id="PF20259">
    <property type="entry name" value="tRNA_Me_trans_M"/>
    <property type="match status" value="1"/>
</dbReference>
<dbReference type="SUPFAM" id="SSF52402">
    <property type="entry name" value="Adenine nucleotide alpha hydrolases-like"/>
    <property type="match status" value="1"/>
</dbReference>
<keyword id="KW-0067">ATP-binding</keyword>
<keyword id="KW-0963">Cytoplasm</keyword>
<keyword id="KW-1015">Disulfide bond</keyword>
<keyword id="KW-0547">Nucleotide-binding</keyword>
<keyword id="KW-1185">Reference proteome</keyword>
<keyword id="KW-0694">RNA-binding</keyword>
<keyword id="KW-0808">Transferase</keyword>
<keyword id="KW-0819">tRNA processing</keyword>
<keyword id="KW-0820">tRNA-binding</keyword>
<accession>P47537</accession>
<name>MNMA_MYCGE</name>
<evidence type="ECO:0000255" key="1">
    <source>
        <dbReference type="HAMAP-Rule" id="MF_00144"/>
    </source>
</evidence>
<comment type="function">
    <text evidence="1">Catalyzes the 2-thiolation of uridine at the wobble position (U34) of tRNA, leading to the formation of s(2)U34.</text>
</comment>
<comment type="catalytic activity">
    <reaction evidence="1">
        <text>S-sulfanyl-L-cysteinyl-[protein] + uridine(34) in tRNA + AH2 + ATP = 2-thiouridine(34) in tRNA + L-cysteinyl-[protein] + A + AMP + diphosphate + H(+)</text>
        <dbReference type="Rhea" id="RHEA:47032"/>
        <dbReference type="Rhea" id="RHEA-COMP:10131"/>
        <dbReference type="Rhea" id="RHEA-COMP:11726"/>
        <dbReference type="Rhea" id="RHEA-COMP:11727"/>
        <dbReference type="Rhea" id="RHEA-COMP:11728"/>
        <dbReference type="ChEBI" id="CHEBI:13193"/>
        <dbReference type="ChEBI" id="CHEBI:15378"/>
        <dbReference type="ChEBI" id="CHEBI:17499"/>
        <dbReference type="ChEBI" id="CHEBI:29950"/>
        <dbReference type="ChEBI" id="CHEBI:30616"/>
        <dbReference type="ChEBI" id="CHEBI:33019"/>
        <dbReference type="ChEBI" id="CHEBI:61963"/>
        <dbReference type="ChEBI" id="CHEBI:65315"/>
        <dbReference type="ChEBI" id="CHEBI:87170"/>
        <dbReference type="ChEBI" id="CHEBI:456215"/>
        <dbReference type="EC" id="2.8.1.13"/>
    </reaction>
</comment>
<comment type="subcellular location">
    <subcellularLocation>
        <location evidence="1">Cytoplasm</location>
    </subcellularLocation>
</comment>
<comment type="similarity">
    <text evidence="1">Belongs to the MnmA/TRMU family.</text>
</comment>
<organism>
    <name type="scientific">Mycoplasma genitalium (strain ATCC 33530 / DSM 19775 / NCTC 10195 / G37)</name>
    <name type="common">Mycoplasmoides genitalium</name>
    <dbReference type="NCBI Taxonomy" id="243273"/>
    <lineage>
        <taxon>Bacteria</taxon>
        <taxon>Bacillati</taxon>
        <taxon>Mycoplasmatota</taxon>
        <taxon>Mycoplasmoidales</taxon>
        <taxon>Mycoplasmoidaceae</taxon>
        <taxon>Mycoplasmoides</taxon>
    </lineage>
</organism>
<feature type="chain" id="PRO_0000121651" description="tRNA-specific 2-thiouridylase MnmA">
    <location>
        <begin position="1"/>
        <end position="367"/>
    </location>
</feature>
<feature type="region of interest" description="Interaction with target base in tRNA" evidence="1">
    <location>
        <begin position="109"/>
        <end position="111"/>
    </location>
</feature>
<feature type="region of interest" description="Interaction with tRNA" evidence="1">
    <location>
        <begin position="161"/>
        <end position="163"/>
    </location>
</feature>
<feature type="active site" description="Nucleophile" evidence="1">
    <location>
        <position position="114"/>
    </location>
</feature>
<feature type="active site" description="Cysteine persulfide intermediate" evidence="1">
    <location>
        <position position="211"/>
    </location>
</feature>
<feature type="binding site" evidence="1">
    <location>
        <begin position="11"/>
        <end position="18"/>
    </location>
    <ligand>
        <name>ATP</name>
        <dbReference type="ChEBI" id="CHEBI:30616"/>
    </ligand>
</feature>
<feature type="binding site" evidence="1">
    <location>
        <position position="37"/>
    </location>
    <ligand>
        <name>ATP</name>
        <dbReference type="ChEBI" id="CHEBI:30616"/>
    </ligand>
</feature>
<feature type="binding site" evidence="1">
    <location>
        <position position="139"/>
    </location>
    <ligand>
        <name>ATP</name>
        <dbReference type="ChEBI" id="CHEBI:30616"/>
    </ligand>
</feature>
<feature type="site" description="Interaction with tRNA" evidence="1">
    <location>
        <position position="140"/>
    </location>
</feature>
<feature type="site" description="Interaction with tRNA" evidence="1">
    <location>
        <position position="350"/>
    </location>
</feature>
<feature type="disulfide bond" description="Alternate" evidence="1">
    <location>
        <begin position="114"/>
        <end position="211"/>
    </location>
</feature>